<proteinExistence type="inferred from homology"/>
<keyword id="KW-0004">4Fe-4S</keyword>
<keyword id="KW-0963">Cytoplasm</keyword>
<keyword id="KW-0408">Iron</keyword>
<keyword id="KW-0411">Iron-sulfur</keyword>
<keyword id="KW-0479">Metal-binding</keyword>
<keyword id="KW-1185">Reference proteome</keyword>
<keyword id="KW-0949">S-adenosyl-L-methionine</keyword>
<keyword id="KW-0808">Transferase</keyword>
<dbReference type="EC" id="2.8.1.8" evidence="1"/>
<dbReference type="EMBL" id="CR378672">
    <property type="protein sequence ID" value="CAG21239.1"/>
    <property type="molecule type" value="Genomic_DNA"/>
</dbReference>
<dbReference type="RefSeq" id="WP_011219508.1">
    <property type="nucleotide sequence ID" value="NC_006370.1"/>
</dbReference>
<dbReference type="SMR" id="Q6LN87"/>
<dbReference type="STRING" id="298386.PBPRA2896"/>
<dbReference type="KEGG" id="ppr:PBPRA2896"/>
<dbReference type="eggNOG" id="COG0320">
    <property type="taxonomic scope" value="Bacteria"/>
</dbReference>
<dbReference type="HOGENOM" id="CLU_033144_2_1_6"/>
<dbReference type="UniPathway" id="UPA00538">
    <property type="reaction ID" value="UER00593"/>
</dbReference>
<dbReference type="Proteomes" id="UP000000593">
    <property type="component" value="Chromosome 1"/>
</dbReference>
<dbReference type="GO" id="GO:0005737">
    <property type="term" value="C:cytoplasm"/>
    <property type="evidence" value="ECO:0007669"/>
    <property type="project" value="UniProtKB-SubCell"/>
</dbReference>
<dbReference type="GO" id="GO:0051539">
    <property type="term" value="F:4 iron, 4 sulfur cluster binding"/>
    <property type="evidence" value="ECO:0007669"/>
    <property type="project" value="UniProtKB-UniRule"/>
</dbReference>
<dbReference type="GO" id="GO:0016992">
    <property type="term" value="F:lipoate synthase activity"/>
    <property type="evidence" value="ECO:0007669"/>
    <property type="project" value="UniProtKB-UniRule"/>
</dbReference>
<dbReference type="GO" id="GO:0046872">
    <property type="term" value="F:metal ion binding"/>
    <property type="evidence" value="ECO:0007669"/>
    <property type="project" value="UniProtKB-KW"/>
</dbReference>
<dbReference type="CDD" id="cd01335">
    <property type="entry name" value="Radical_SAM"/>
    <property type="match status" value="1"/>
</dbReference>
<dbReference type="FunFam" id="3.20.20.70:FF:000023">
    <property type="entry name" value="Lipoyl synthase"/>
    <property type="match status" value="1"/>
</dbReference>
<dbReference type="Gene3D" id="3.20.20.70">
    <property type="entry name" value="Aldolase class I"/>
    <property type="match status" value="1"/>
</dbReference>
<dbReference type="HAMAP" id="MF_00206">
    <property type="entry name" value="Lipoyl_synth"/>
    <property type="match status" value="1"/>
</dbReference>
<dbReference type="InterPro" id="IPR013785">
    <property type="entry name" value="Aldolase_TIM"/>
</dbReference>
<dbReference type="InterPro" id="IPR006638">
    <property type="entry name" value="Elp3/MiaA/NifB-like_rSAM"/>
</dbReference>
<dbReference type="InterPro" id="IPR031691">
    <property type="entry name" value="LIAS_N"/>
</dbReference>
<dbReference type="InterPro" id="IPR003698">
    <property type="entry name" value="Lipoyl_synth"/>
</dbReference>
<dbReference type="InterPro" id="IPR007197">
    <property type="entry name" value="rSAM"/>
</dbReference>
<dbReference type="NCBIfam" id="TIGR00510">
    <property type="entry name" value="lipA"/>
    <property type="match status" value="1"/>
</dbReference>
<dbReference type="NCBIfam" id="NF004019">
    <property type="entry name" value="PRK05481.1"/>
    <property type="match status" value="1"/>
</dbReference>
<dbReference type="NCBIfam" id="NF009544">
    <property type="entry name" value="PRK12928.1"/>
    <property type="match status" value="1"/>
</dbReference>
<dbReference type="PANTHER" id="PTHR10949">
    <property type="entry name" value="LIPOYL SYNTHASE"/>
    <property type="match status" value="1"/>
</dbReference>
<dbReference type="PANTHER" id="PTHR10949:SF0">
    <property type="entry name" value="LIPOYL SYNTHASE, MITOCHONDRIAL"/>
    <property type="match status" value="1"/>
</dbReference>
<dbReference type="Pfam" id="PF16881">
    <property type="entry name" value="LIAS_N"/>
    <property type="match status" value="1"/>
</dbReference>
<dbReference type="Pfam" id="PF04055">
    <property type="entry name" value="Radical_SAM"/>
    <property type="match status" value="1"/>
</dbReference>
<dbReference type="PIRSF" id="PIRSF005963">
    <property type="entry name" value="Lipoyl_synth"/>
    <property type="match status" value="1"/>
</dbReference>
<dbReference type="SFLD" id="SFLDF00271">
    <property type="entry name" value="lipoyl_synthase"/>
    <property type="match status" value="1"/>
</dbReference>
<dbReference type="SFLD" id="SFLDG01058">
    <property type="entry name" value="lipoyl_synthase_like"/>
    <property type="match status" value="1"/>
</dbReference>
<dbReference type="SMART" id="SM00729">
    <property type="entry name" value="Elp3"/>
    <property type="match status" value="1"/>
</dbReference>
<dbReference type="SUPFAM" id="SSF102114">
    <property type="entry name" value="Radical SAM enzymes"/>
    <property type="match status" value="1"/>
</dbReference>
<dbReference type="PROSITE" id="PS51918">
    <property type="entry name" value="RADICAL_SAM"/>
    <property type="match status" value="1"/>
</dbReference>
<comment type="function">
    <text evidence="1">Catalyzes the radical-mediated insertion of two sulfur atoms into the C-6 and C-8 positions of the octanoyl moiety bound to the lipoyl domains of lipoate-dependent enzymes, thereby converting the octanoylated domains into lipoylated derivatives.</text>
</comment>
<comment type="catalytic activity">
    <reaction evidence="1">
        <text>[[Fe-S] cluster scaffold protein carrying a second [4Fe-4S](2+) cluster] + N(6)-octanoyl-L-lysyl-[protein] + 2 oxidized [2Fe-2S]-[ferredoxin] + 2 S-adenosyl-L-methionine + 4 H(+) = [[Fe-S] cluster scaffold protein] + N(6)-[(R)-dihydrolipoyl]-L-lysyl-[protein] + 4 Fe(3+) + 2 hydrogen sulfide + 2 5'-deoxyadenosine + 2 L-methionine + 2 reduced [2Fe-2S]-[ferredoxin]</text>
        <dbReference type="Rhea" id="RHEA:16585"/>
        <dbReference type="Rhea" id="RHEA-COMP:9928"/>
        <dbReference type="Rhea" id="RHEA-COMP:10000"/>
        <dbReference type="Rhea" id="RHEA-COMP:10001"/>
        <dbReference type="Rhea" id="RHEA-COMP:10475"/>
        <dbReference type="Rhea" id="RHEA-COMP:14568"/>
        <dbReference type="Rhea" id="RHEA-COMP:14569"/>
        <dbReference type="ChEBI" id="CHEBI:15378"/>
        <dbReference type="ChEBI" id="CHEBI:17319"/>
        <dbReference type="ChEBI" id="CHEBI:29034"/>
        <dbReference type="ChEBI" id="CHEBI:29919"/>
        <dbReference type="ChEBI" id="CHEBI:33722"/>
        <dbReference type="ChEBI" id="CHEBI:33737"/>
        <dbReference type="ChEBI" id="CHEBI:33738"/>
        <dbReference type="ChEBI" id="CHEBI:57844"/>
        <dbReference type="ChEBI" id="CHEBI:59789"/>
        <dbReference type="ChEBI" id="CHEBI:78809"/>
        <dbReference type="ChEBI" id="CHEBI:83100"/>
        <dbReference type="EC" id="2.8.1.8"/>
    </reaction>
</comment>
<comment type="cofactor">
    <cofactor evidence="1">
        <name>[4Fe-4S] cluster</name>
        <dbReference type="ChEBI" id="CHEBI:49883"/>
    </cofactor>
    <text evidence="1">Binds 2 [4Fe-4S] clusters per subunit. One cluster is coordinated with 3 cysteines and an exchangeable S-adenosyl-L-methionine.</text>
</comment>
<comment type="pathway">
    <text evidence="1">Protein modification; protein lipoylation via endogenous pathway; protein N(6)-(lipoyl)lysine from octanoyl-[acyl-carrier-protein]: step 2/2.</text>
</comment>
<comment type="subcellular location">
    <subcellularLocation>
        <location evidence="1">Cytoplasm</location>
    </subcellularLocation>
</comment>
<comment type="similarity">
    <text evidence="1">Belongs to the radical SAM superfamily. Lipoyl synthase family.</text>
</comment>
<sequence length="322" mass="36335">MSKPIKIEQGIKYRDADKMALIPVRNVAEEAPKEVLRKPAWMKIKLPSDSKRIQEIKSALRKNKLHSVCEEASCPNLAECFNHGTATFMILGAICTRRCPFCDVAHGRPLPPNAEEPSHLAQTIADMKLKYVVITSVDRDDLRDGGAQHFVDCIREIREKSPEIHIETLVPDFRGRMDRALDILQGTPPNVFNHNLETAPRLYRKARPGANYQWSLDLLKNFKEIHPEVPTKSGVMMGLGETKEEIIQVLKDLRAHGVTMLTLGQYLAPSRHHLPVERYVPPAEFDELKEIALELGFTHAACGPFVRSSYHADLQAQGLEIK</sequence>
<organism>
    <name type="scientific">Photobacterium profundum (strain SS9)</name>
    <dbReference type="NCBI Taxonomy" id="298386"/>
    <lineage>
        <taxon>Bacteria</taxon>
        <taxon>Pseudomonadati</taxon>
        <taxon>Pseudomonadota</taxon>
        <taxon>Gammaproteobacteria</taxon>
        <taxon>Vibrionales</taxon>
        <taxon>Vibrionaceae</taxon>
        <taxon>Photobacterium</taxon>
    </lineage>
</organism>
<evidence type="ECO:0000255" key="1">
    <source>
        <dbReference type="HAMAP-Rule" id="MF_00206"/>
    </source>
</evidence>
<evidence type="ECO:0000255" key="2">
    <source>
        <dbReference type="PROSITE-ProRule" id="PRU01266"/>
    </source>
</evidence>
<accession>Q6LN87</accession>
<reference key="1">
    <citation type="journal article" date="2005" name="Science">
        <title>Life at depth: Photobacterium profundum genome sequence and expression analysis.</title>
        <authorList>
            <person name="Vezzi A."/>
            <person name="Campanaro S."/>
            <person name="D'Angelo M."/>
            <person name="Simonato F."/>
            <person name="Vitulo N."/>
            <person name="Lauro F.M."/>
            <person name="Cestaro A."/>
            <person name="Malacrida G."/>
            <person name="Simionati B."/>
            <person name="Cannata N."/>
            <person name="Romualdi C."/>
            <person name="Bartlett D.H."/>
            <person name="Valle G."/>
        </authorList>
    </citation>
    <scope>NUCLEOTIDE SEQUENCE [LARGE SCALE GENOMIC DNA]</scope>
    <source>
        <strain>ATCC BAA-1253 / SS9</strain>
    </source>
</reference>
<name>LIPA_PHOPR</name>
<feature type="chain" id="PRO_1000012253" description="Lipoyl synthase">
    <location>
        <begin position="1"/>
        <end position="322"/>
    </location>
</feature>
<feature type="domain" description="Radical SAM core" evidence="2">
    <location>
        <begin position="81"/>
        <end position="298"/>
    </location>
</feature>
<feature type="binding site" evidence="1">
    <location>
        <position position="69"/>
    </location>
    <ligand>
        <name>[4Fe-4S] cluster</name>
        <dbReference type="ChEBI" id="CHEBI:49883"/>
        <label>1</label>
    </ligand>
</feature>
<feature type="binding site" evidence="1">
    <location>
        <position position="74"/>
    </location>
    <ligand>
        <name>[4Fe-4S] cluster</name>
        <dbReference type="ChEBI" id="CHEBI:49883"/>
        <label>1</label>
    </ligand>
</feature>
<feature type="binding site" evidence="1">
    <location>
        <position position="80"/>
    </location>
    <ligand>
        <name>[4Fe-4S] cluster</name>
        <dbReference type="ChEBI" id="CHEBI:49883"/>
        <label>1</label>
    </ligand>
</feature>
<feature type="binding site" evidence="1">
    <location>
        <position position="95"/>
    </location>
    <ligand>
        <name>[4Fe-4S] cluster</name>
        <dbReference type="ChEBI" id="CHEBI:49883"/>
        <label>2</label>
        <note>4Fe-4S-S-AdoMet</note>
    </ligand>
</feature>
<feature type="binding site" evidence="1">
    <location>
        <position position="99"/>
    </location>
    <ligand>
        <name>[4Fe-4S] cluster</name>
        <dbReference type="ChEBI" id="CHEBI:49883"/>
        <label>2</label>
        <note>4Fe-4S-S-AdoMet</note>
    </ligand>
</feature>
<feature type="binding site" evidence="1">
    <location>
        <position position="102"/>
    </location>
    <ligand>
        <name>[4Fe-4S] cluster</name>
        <dbReference type="ChEBI" id="CHEBI:49883"/>
        <label>2</label>
        <note>4Fe-4S-S-AdoMet</note>
    </ligand>
</feature>
<feature type="binding site" evidence="1">
    <location>
        <position position="309"/>
    </location>
    <ligand>
        <name>[4Fe-4S] cluster</name>
        <dbReference type="ChEBI" id="CHEBI:49883"/>
        <label>1</label>
    </ligand>
</feature>
<protein>
    <recommendedName>
        <fullName evidence="1">Lipoyl synthase</fullName>
        <ecNumber evidence="1">2.8.1.8</ecNumber>
    </recommendedName>
    <alternativeName>
        <fullName evidence="1">Lip-syn</fullName>
        <shortName evidence="1">LS</shortName>
    </alternativeName>
    <alternativeName>
        <fullName evidence="1">Lipoate synthase</fullName>
    </alternativeName>
    <alternativeName>
        <fullName evidence="1">Lipoic acid synthase</fullName>
    </alternativeName>
    <alternativeName>
        <fullName evidence="1">Sulfur insertion protein LipA</fullName>
    </alternativeName>
</protein>
<gene>
    <name evidence="1" type="primary">lipA</name>
    <name type="ordered locus">PBPRA2896</name>
</gene>